<organism>
    <name type="scientific">Clavispora lusitaniae (strain ATCC 42720)</name>
    <name type="common">Yeast</name>
    <name type="synonym">Candida lusitaniae</name>
    <dbReference type="NCBI Taxonomy" id="306902"/>
    <lineage>
        <taxon>Eukaryota</taxon>
        <taxon>Fungi</taxon>
        <taxon>Dikarya</taxon>
        <taxon>Ascomycota</taxon>
        <taxon>Saccharomycotina</taxon>
        <taxon>Pichiomycetes</taxon>
        <taxon>Metschnikowiaceae</taxon>
        <taxon>Clavispora</taxon>
    </lineage>
</organism>
<proteinExistence type="inferred from homology"/>
<evidence type="ECO:0000255" key="1">
    <source>
        <dbReference type="HAMAP-Rule" id="MF_03116"/>
    </source>
</evidence>
<reference key="1">
    <citation type="journal article" date="2009" name="Nature">
        <title>Evolution of pathogenicity and sexual reproduction in eight Candida genomes.</title>
        <authorList>
            <person name="Butler G."/>
            <person name="Rasmussen M.D."/>
            <person name="Lin M.F."/>
            <person name="Santos M.A.S."/>
            <person name="Sakthikumar S."/>
            <person name="Munro C.A."/>
            <person name="Rheinbay E."/>
            <person name="Grabherr M."/>
            <person name="Forche A."/>
            <person name="Reedy J.L."/>
            <person name="Agrafioti I."/>
            <person name="Arnaud M.B."/>
            <person name="Bates S."/>
            <person name="Brown A.J.P."/>
            <person name="Brunke S."/>
            <person name="Costanzo M.C."/>
            <person name="Fitzpatrick D.A."/>
            <person name="de Groot P.W.J."/>
            <person name="Harris D."/>
            <person name="Hoyer L.L."/>
            <person name="Hube B."/>
            <person name="Klis F.M."/>
            <person name="Kodira C."/>
            <person name="Lennard N."/>
            <person name="Logue M.E."/>
            <person name="Martin R."/>
            <person name="Neiman A.M."/>
            <person name="Nikolaou E."/>
            <person name="Quail M.A."/>
            <person name="Quinn J."/>
            <person name="Santos M.C."/>
            <person name="Schmitzberger F.F."/>
            <person name="Sherlock G."/>
            <person name="Shah P."/>
            <person name="Silverstein K.A.T."/>
            <person name="Skrzypek M.S."/>
            <person name="Soll D."/>
            <person name="Staggs R."/>
            <person name="Stansfield I."/>
            <person name="Stumpf M.P.H."/>
            <person name="Sudbery P.E."/>
            <person name="Srikantha T."/>
            <person name="Zeng Q."/>
            <person name="Berman J."/>
            <person name="Berriman M."/>
            <person name="Heitman J."/>
            <person name="Gow N.A.R."/>
            <person name="Lorenz M.C."/>
            <person name="Birren B.W."/>
            <person name="Kellis M."/>
            <person name="Cuomo C.A."/>
        </authorList>
    </citation>
    <scope>NUCLEOTIDE SEQUENCE [LARGE SCALE GENOMIC DNA]</scope>
    <source>
        <strain>ATCC 42720</strain>
    </source>
</reference>
<keyword id="KW-0028">Amino-acid biosynthesis</keyword>
<keyword id="KW-0963">Cytoplasm</keyword>
<keyword id="KW-0456">Lyase</keyword>
<keyword id="KW-0479">Metal-binding</keyword>
<keyword id="KW-0486">Methionine biosynthesis</keyword>
<keyword id="KW-1185">Reference proteome</keyword>
<keyword id="KW-0862">Zinc</keyword>
<dbReference type="EC" id="4.2.1.109" evidence="1"/>
<dbReference type="EMBL" id="CH408076">
    <property type="protein sequence ID" value="EEQ36641.1"/>
    <property type="molecule type" value="Genomic_DNA"/>
</dbReference>
<dbReference type="RefSeq" id="XP_002619605.1">
    <property type="nucleotide sequence ID" value="XM_002619559.1"/>
</dbReference>
<dbReference type="SMR" id="C4XXU2"/>
<dbReference type="FunCoup" id="C4XXU2">
    <property type="interactions" value="246"/>
</dbReference>
<dbReference type="STRING" id="306902.C4XXU2"/>
<dbReference type="GeneID" id="8500364"/>
<dbReference type="KEGG" id="clu:CLUG_00764"/>
<dbReference type="VEuPathDB" id="FungiDB:CLUG_00764"/>
<dbReference type="HOGENOM" id="CLU_006033_4_0_1"/>
<dbReference type="InParanoid" id="C4XXU2"/>
<dbReference type="OMA" id="WFPGTSG"/>
<dbReference type="OrthoDB" id="116802at4891"/>
<dbReference type="UniPathway" id="UPA00904">
    <property type="reaction ID" value="UER00875"/>
</dbReference>
<dbReference type="Proteomes" id="UP000007703">
    <property type="component" value="Unassembled WGS sequence"/>
</dbReference>
<dbReference type="GO" id="GO:0005737">
    <property type="term" value="C:cytoplasm"/>
    <property type="evidence" value="ECO:0007669"/>
    <property type="project" value="UniProtKB-SubCell"/>
</dbReference>
<dbReference type="GO" id="GO:0046570">
    <property type="term" value="F:methylthioribulose 1-phosphate dehydratase activity"/>
    <property type="evidence" value="ECO:0007669"/>
    <property type="project" value="UniProtKB-UniRule"/>
</dbReference>
<dbReference type="GO" id="GO:0008270">
    <property type="term" value="F:zinc ion binding"/>
    <property type="evidence" value="ECO:0007669"/>
    <property type="project" value="UniProtKB-UniRule"/>
</dbReference>
<dbReference type="GO" id="GO:0019509">
    <property type="term" value="P:L-methionine salvage from methylthioadenosine"/>
    <property type="evidence" value="ECO:0007669"/>
    <property type="project" value="UniProtKB-UniRule"/>
</dbReference>
<dbReference type="FunFam" id="3.40.225.10:FF:000003">
    <property type="entry name" value="Methylthioribulose-1-phosphate dehydratase"/>
    <property type="match status" value="1"/>
</dbReference>
<dbReference type="Gene3D" id="3.40.225.10">
    <property type="entry name" value="Class II aldolase/adducin N-terminal domain"/>
    <property type="match status" value="1"/>
</dbReference>
<dbReference type="HAMAP" id="MF_03116">
    <property type="entry name" value="Salvage_MtnB_euk"/>
    <property type="match status" value="1"/>
</dbReference>
<dbReference type="InterPro" id="IPR001303">
    <property type="entry name" value="Aldolase_II/adducin_N"/>
</dbReference>
<dbReference type="InterPro" id="IPR036409">
    <property type="entry name" value="Aldolase_II/adducin_N_sf"/>
</dbReference>
<dbReference type="InterPro" id="IPR017714">
    <property type="entry name" value="MethylthioRu-1-P_deHdtase_MtnB"/>
</dbReference>
<dbReference type="InterPro" id="IPR027514">
    <property type="entry name" value="Salvage_MtnB_euk"/>
</dbReference>
<dbReference type="NCBIfam" id="TIGR03328">
    <property type="entry name" value="salvage_mtnB"/>
    <property type="match status" value="1"/>
</dbReference>
<dbReference type="PANTHER" id="PTHR10640">
    <property type="entry name" value="METHYLTHIORIBULOSE-1-PHOSPHATE DEHYDRATASE"/>
    <property type="match status" value="1"/>
</dbReference>
<dbReference type="PANTHER" id="PTHR10640:SF7">
    <property type="entry name" value="METHYLTHIORIBULOSE-1-PHOSPHATE DEHYDRATASE"/>
    <property type="match status" value="1"/>
</dbReference>
<dbReference type="Pfam" id="PF00596">
    <property type="entry name" value="Aldolase_II"/>
    <property type="match status" value="1"/>
</dbReference>
<dbReference type="SMART" id="SM01007">
    <property type="entry name" value="Aldolase_II"/>
    <property type="match status" value="1"/>
</dbReference>
<dbReference type="SUPFAM" id="SSF53639">
    <property type="entry name" value="AraD/HMP-PK domain-like"/>
    <property type="match status" value="1"/>
</dbReference>
<protein>
    <recommendedName>
        <fullName evidence="1">Methylthioribulose-1-phosphate dehydratase</fullName>
        <shortName evidence="1">MTRu-1-P dehydratase</shortName>
        <ecNumber evidence="1">4.2.1.109</ecNumber>
    </recommendedName>
</protein>
<accession>C4XXU2</accession>
<sequence length="250" mass="27841">MSSFFSDSPTHPANLICELCRLFYNNGWVTGTGGGISIRDVDGPNPNIVYIAPSGIQKERLQPREMFVAELPGKILRSPNDDSDGQPLSPDLAKSFRYKPSACTPLFLSCYNMRDAGACIHTHSQNAVMATLLFEDKVEFSMSHIEQIKALPHLQVDSDTGKVQKVGSMQFYDTMVLPIIDNTPHEEDLTDSLQEAIKNYPGATAVLVRRHGIYVWGETVWKAKVYNEAIDYLLELAIKMHQAGIPLVKK</sequence>
<feature type="chain" id="PRO_0000393819" description="Methylthioribulose-1-phosphate dehydratase">
    <location>
        <begin position="1"/>
        <end position="250"/>
    </location>
</feature>
<feature type="active site" description="Proton donor/acceptor" evidence="1">
    <location>
        <position position="146"/>
    </location>
</feature>
<feature type="binding site" evidence="1">
    <location>
        <position position="103"/>
    </location>
    <ligand>
        <name>substrate</name>
    </ligand>
</feature>
<feature type="binding site" evidence="1">
    <location>
        <position position="121"/>
    </location>
    <ligand>
        <name>Zn(2+)</name>
        <dbReference type="ChEBI" id="CHEBI:29105"/>
    </ligand>
</feature>
<feature type="binding site" evidence="1">
    <location>
        <position position="123"/>
    </location>
    <ligand>
        <name>Zn(2+)</name>
        <dbReference type="ChEBI" id="CHEBI:29105"/>
    </ligand>
</feature>
<feature type="binding site" evidence="1">
    <location>
        <position position="211"/>
    </location>
    <ligand>
        <name>Zn(2+)</name>
        <dbReference type="ChEBI" id="CHEBI:29105"/>
    </ligand>
</feature>
<comment type="function">
    <text evidence="1">Catalyzes the dehydration of methylthioribulose-1-phosphate (MTRu-1-P) into 2,3-diketo-5-methylthiopentyl-1-phosphate (DK-MTP-1-P).</text>
</comment>
<comment type="catalytic activity">
    <reaction evidence="1">
        <text>5-(methylsulfanyl)-D-ribulose 1-phosphate = 5-methylsulfanyl-2,3-dioxopentyl phosphate + H2O</text>
        <dbReference type="Rhea" id="RHEA:15549"/>
        <dbReference type="ChEBI" id="CHEBI:15377"/>
        <dbReference type="ChEBI" id="CHEBI:58548"/>
        <dbReference type="ChEBI" id="CHEBI:58828"/>
        <dbReference type="EC" id="4.2.1.109"/>
    </reaction>
</comment>
<comment type="cofactor">
    <cofactor evidence="1">
        <name>Zn(2+)</name>
        <dbReference type="ChEBI" id="CHEBI:29105"/>
    </cofactor>
    <text evidence="1">Binds 1 zinc ion per subunit.</text>
</comment>
<comment type="pathway">
    <text evidence="1">Amino-acid biosynthesis; L-methionine biosynthesis via salvage pathway; L-methionine from S-methyl-5-thio-alpha-D-ribose 1-phosphate: step 2/6.</text>
</comment>
<comment type="subcellular location">
    <subcellularLocation>
        <location evidence="1">Cytoplasm</location>
    </subcellularLocation>
</comment>
<comment type="similarity">
    <text evidence="1">Belongs to the aldolase class II family. MtnB subfamily.</text>
</comment>
<name>MTNB_CLAL4</name>
<gene>
    <name evidence="1" type="primary">MDE1</name>
    <name type="ORF">CLUG_00764</name>
</gene>